<protein>
    <recommendedName>
        <fullName>C-C motif chemokine 20</fullName>
    </recommendedName>
    <alternativeName>
        <fullName>Beta-chemokine exodus-1</fullName>
    </alternativeName>
    <alternativeName>
        <fullName>CC chemokine LARC</fullName>
    </alternativeName>
    <alternativeName>
        <fullName>CC chemokine ST38</fullName>
    </alternativeName>
    <alternativeName>
        <fullName>Liver and activation-regulated chemokine</fullName>
    </alternativeName>
    <alternativeName>
        <fullName>Macrophage inflammatory protein 3 alpha</fullName>
        <shortName>MIP-3-alpha</shortName>
    </alternativeName>
    <alternativeName>
        <fullName>Small-inducible cytokine A20</fullName>
    </alternativeName>
</protein>
<feature type="signal peptide" evidence="4">
    <location>
        <begin position="1"/>
        <end position="26"/>
    </location>
</feature>
<feature type="chain" id="PRO_0000005219" description="C-C motif chemokine 20">
    <location>
        <begin position="27"/>
        <end position="96"/>
    </location>
</feature>
<feature type="disulfide bond" evidence="1">
    <location>
        <begin position="31"/>
        <end position="58"/>
    </location>
</feature>
<feature type="disulfide bond" evidence="1">
    <location>
        <begin position="32"/>
        <end position="74"/>
    </location>
</feature>
<evidence type="ECO:0000250" key="1"/>
<evidence type="ECO:0000250" key="2">
    <source>
        <dbReference type="UniProtKB" id="O89093"/>
    </source>
</evidence>
<evidence type="ECO:0000250" key="3">
    <source>
        <dbReference type="UniProtKB" id="P78556"/>
    </source>
</evidence>
<evidence type="ECO:0000269" key="4">
    <source>
    </source>
</evidence>
<evidence type="ECO:0000305" key="5"/>
<keyword id="KW-0145">Chemotaxis</keyword>
<keyword id="KW-0202">Cytokine</keyword>
<keyword id="KW-0903">Direct protein sequencing</keyword>
<keyword id="KW-1015">Disulfide bond</keyword>
<keyword id="KW-0395">Inflammatory response</keyword>
<keyword id="KW-1185">Reference proteome</keyword>
<keyword id="KW-0964">Secreted</keyword>
<keyword id="KW-0732">Signal</keyword>
<reference key="1">
    <citation type="submission" date="1997-02" db="EMBL/GenBank/DDBJ databases">
        <title>Activated rat astrocytes produce the CC chemokine Exodus.</title>
        <authorList>
            <person name="Kelner G.S."/>
            <person name="Maciejewski-Lenoir D."/>
            <person name="Lee E.D."/>
            <person name="Maki R.A."/>
        </authorList>
    </citation>
    <scope>NUCLEOTIDE SEQUENCE [MRNA]</scope>
    <source>
        <strain>Sprague-Dawley</strain>
    </source>
</reference>
<reference key="2">
    <citation type="journal article" date="1998" name="J. Neuroimmunol.">
        <title>A novel rat CC chemokine, identified by targeted differential display, is upregulated in brain inflammation.</title>
        <authorList>
            <person name="Utans-Schneitz U."/>
            <person name="Lorez H."/>
            <person name="Klinkert W.E.F."/>
            <person name="da Silva J."/>
            <person name="Lesslauer W."/>
        </authorList>
    </citation>
    <scope>NUCLEOTIDE SEQUENCE [MRNA]</scope>
    <scope>PROTEIN SEQUENCE OF N-TERMINUS</scope>
    <source>
        <strain>Fischer 344</strain>
        <tissue>Brain</tissue>
    </source>
</reference>
<dbReference type="EMBL" id="U90447">
    <property type="protein sequence ID" value="AAB61459.1"/>
    <property type="molecule type" value="mRNA"/>
</dbReference>
<dbReference type="EMBL" id="AF053312">
    <property type="protein sequence ID" value="AAC78294.1"/>
    <property type="molecule type" value="mRNA"/>
</dbReference>
<dbReference type="RefSeq" id="NP_062106.1">
    <property type="nucleotide sequence ID" value="NM_019233.2"/>
</dbReference>
<dbReference type="SMR" id="P97884"/>
<dbReference type="FunCoup" id="P97884">
    <property type="interactions" value="265"/>
</dbReference>
<dbReference type="STRING" id="10116.ENSRNOP00000021730"/>
<dbReference type="PaxDb" id="10116-ENSRNOP00000021730"/>
<dbReference type="GeneID" id="29538"/>
<dbReference type="KEGG" id="rno:29538"/>
<dbReference type="UCSC" id="RGD:3646">
    <property type="organism name" value="rat"/>
</dbReference>
<dbReference type="AGR" id="RGD:3646"/>
<dbReference type="CTD" id="6364"/>
<dbReference type="RGD" id="3646">
    <property type="gene designation" value="Ccl20"/>
</dbReference>
<dbReference type="VEuPathDB" id="HostDB:ENSRNOG00000015992"/>
<dbReference type="HOGENOM" id="CLU_141716_3_3_1"/>
<dbReference type="InParanoid" id="P97884"/>
<dbReference type="OrthoDB" id="8870994at2759"/>
<dbReference type="PhylomeDB" id="P97884"/>
<dbReference type="TreeFam" id="TF334888"/>
<dbReference type="Reactome" id="R-RNO-380108">
    <property type="pathway name" value="Chemokine receptors bind chemokines"/>
</dbReference>
<dbReference type="Reactome" id="R-RNO-418594">
    <property type="pathway name" value="G alpha (i) signalling events"/>
</dbReference>
<dbReference type="PRO" id="PR:P97884"/>
<dbReference type="Proteomes" id="UP000002494">
    <property type="component" value="Chromosome 9"/>
</dbReference>
<dbReference type="Bgee" id="ENSRNOG00000015992">
    <property type="expression patterns" value="Expressed in duodenum and 12 other cell types or tissues"/>
</dbReference>
<dbReference type="GO" id="GO:0005615">
    <property type="term" value="C:extracellular space"/>
    <property type="evidence" value="ECO:0000314"/>
    <property type="project" value="RGD"/>
</dbReference>
<dbReference type="GO" id="GO:0031731">
    <property type="term" value="F:CCR6 chemokine receptor binding"/>
    <property type="evidence" value="ECO:0000250"/>
    <property type="project" value="UniProtKB"/>
</dbReference>
<dbReference type="GO" id="GO:0008009">
    <property type="term" value="F:chemokine activity"/>
    <property type="evidence" value="ECO:0000314"/>
    <property type="project" value="RGD"/>
</dbReference>
<dbReference type="GO" id="GO:0005125">
    <property type="term" value="F:cytokine activity"/>
    <property type="evidence" value="ECO:0000266"/>
    <property type="project" value="RGD"/>
</dbReference>
<dbReference type="GO" id="GO:0019722">
    <property type="term" value="P:calcium-mediated signaling"/>
    <property type="evidence" value="ECO:0000250"/>
    <property type="project" value="UniProtKB"/>
</dbReference>
<dbReference type="GO" id="GO:0060326">
    <property type="term" value="P:cell chemotaxis"/>
    <property type="evidence" value="ECO:0000266"/>
    <property type="project" value="RGD"/>
</dbReference>
<dbReference type="GO" id="GO:0071222">
    <property type="term" value="P:cellular response to lipopolysaccharide"/>
    <property type="evidence" value="ECO:0000270"/>
    <property type="project" value="RGD"/>
</dbReference>
<dbReference type="GO" id="GO:0071223">
    <property type="term" value="P:cellular response to lipoteichoic acid"/>
    <property type="evidence" value="ECO:0000270"/>
    <property type="project" value="RGD"/>
</dbReference>
<dbReference type="GO" id="GO:0006935">
    <property type="term" value="P:chemotaxis"/>
    <property type="evidence" value="ECO:0000314"/>
    <property type="project" value="RGD"/>
</dbReference>
<dbReference type="GO" id="GO:0006955">
    <property type="term" value="P:immune response"/>
    <property type="evidence" value="ECO:0007669"/>
    <property type="project" value="InterPro"/>
</dbReference>
<dbReference type="GO" id="GO:0006954">
    <property type="term" value="P:inflammatory response"/>
    <property type="evidence" value="ECO:0007669"/>
    <property type="project" value="UniProtKB-KW"/>
</dbReference>
<dbReference type="GO" id="GO:0032730">
    <property type="term" value="P:positive regulation of interleukin-1 alpha production"/>
    <property type="evidence" value="ECO:0000314"/>
    <property type="project" value="RGD"/>
</dbReference>
<dbReference type="GO" id="GO:2000406">
    <property type="term" value="P:positive regulation of T cell migration"/>
    <property type="evidence" value="ECO:0000266"/>
    <property type="project" value="RGD"/>
</dbReference>
<dbReference type="GO" id="GO:0072678">
    <property type="term" value="P:T cell migration"/>
    <property type="evidence" value="ECO:0000250"/>
    <property type="project" value="UniProtKB"/>
</dbReference>
<dbReference type="GO" id="GO:0072679">
    <property type="term" value="P:thymocyte migration"/>
    <property type="evidence" value="ECO:0000250"/>
    <property type="project" value="UniProtKB"/>
</dbReference>
<dbReference type="CDD" id="cd01119">
    <property type="entry name" value="Chemokine_CC_DCCL"/>
    <property type="match status" value="1"/>
</dbReference>
<dbReference type="FunFam" id="2.40.50.40:FF:000012">
    <property type="entry name" value="C-C motif chemokine"/>
    <property type="match status" value="1"/>
</dbReference>
<dbReference type="Gene3D" id="2.40.50.40">
    <property type="match status" value="1"/>
</dbReference>
<dbReference type="InterPro" id="IPR039809">
    <property type="entry name" value="Chemokine_b/g/d"/>
</dbReference>
<dbReference type="InterPro" id="IPR034133">
    <property type="entry name" value="Chemokine_CC_DCCL"/>
</dbReference>
<dbReference type="InterPro" id="IPR001811">
    <property type="entry name" value="Chemokine_IL8-like_dom"/>
</dbReference>
<dbReference type="InterPro" id="IPR036048">
    <property type="entry name" value="Interleukin_8-like_sf"/>
</dbReference>
<dbReference type="PANTHER" id="PTHR12015:SF108">
    <property type="entry name" value="C-C MOTIF CHEMOKINE 20"/>
    <property type="match status" value="1"/>
</dbReference>
<dbReference type="PANTHER" id="PTHR12015">
    <property type="entry name" value="SMALL INDUCIBLE CYTOKINE A"/>
    <property type="match status" value="1"/>
</dbReference>
<dbReference type="Pfam" id="PF00048">
    <property type="entry name" value="IL8"/>
    <property type="match status" value="1"/>
</dbReference>
<dbReference type="SMART" id="SM00199">
    <property type="entry name" value="SCY"/>
    <property type="match status" value="1"/>
</dbReference>
<dbReference type="SUPFAM" id="SSF54117">
    <property type="entry name" value="Interleukin 8-like chemokines"/>
    <property type="match status" value="1"/>
</dbReference>
<organism>
    <name type="scientific">Rattus norvegicus</name>
    <name type="common">Rat</name>
    <dbReference type="NCBI Taxonomy" id="10116"/>
    <lineage>
        <taxon>Eukaryota</taxon>
        <taxon>Metazoa</taxon>
        <taxon>Chordata</taxon>
        <taxon>Craniata</taxon>
        <taxon>Vertebrata</taxon>
        <taxon>Euteleostomi</taxon>
        <taxon>Mammalia</taxon>
        <taxon>Eutheria</taxon>
        <taxon>Euarchontoglires</taxon>
        <taxon>Glires</taxon>
        <taxon>Rodentia</taxon>
        <taxon>Myomorpha</taxon>
        <taxon>Muroidea</taxon>
        <taxon>Muridae</taxon>
        <taxon>Murinae</taxon>
        <taxon>Rattus</taxon>
    </lineage>
</organism>
<gene>
    <name type="primary">Ccl20</name>
    <name type="synonym">Scya20</name>
    <name type="synonym">St38</name>
</gene>
<comment type="function">
    <text evidence="2 3">Acts as a ligand for C-C chemokine receptor CCR6. Signals through binding and activation of CCR6 and induces a strong chemotactic response and mobilization of intracellular calcium ions. The ligand-receptor pair CCL20-CCR6 is responsible for the chemotaxis of dendritic cells (DC), effector/memory T-cells and B-cells and plays an important role at skin and mucosal surfaces under homeostatic and inflammatory conditions, as well as in pathology, including cancer and autoimmune diseases. CCL20 acts as a chemotactic factor that attracts lymphocytes and, slightly, neutrophils, but not monocytes. Involved in the recruitment of both the pro-inflammatory IL17 producing helper T-cells (Th17) and the regulatory T-cells (Treg) to sites of inflammation. Required for optimal migration of thymic natural regulatory T cells (nTregs) and DN1 early thymocyte progenitor cells. Positively regulates sperm motility and chemotaxis via its binding to CCR6 which triggers Ca2+ mobilization in the sperm which is important for its motility. May be involved in formation and function of the mucosal lymphoid tissues by attracting lymphocytes and dendritic cells towards epithelial cells.</text>
</comment>
<comment type="subcellular location">
    <subcellularLocation>
        <location evidence="3">Secreted</location>
    </subcellularLocation>
</comment>
<comment type="tissue specificity">
    <text>Low levels in thymus and lung.</text>
</comment>
<comment type="induction">
    <text>By TNF in experimental allergic panencaphalomyelitis (EAP) and by TNF and IL-1 in primary astrocytes.</text>
</comment>
<comment type="similarity">
    <text evidence="5">Belongs to the intercrine beta (chemokine CC) family.</text>
</comment>
<name>CCL20_RAT</name>
<accession>P97884</accession>
<proteinExistence type="evidence at protein level"/>
<sequence length="96" mass="10875">MACKHLPFLALAGVLLAYLCSQSEAASNFDCCLTYTKNVYHHARNFVGFTTQMADEACDINAIIFHLKSKRSVCADPKQIWVKRILHLLSLRTKKM</sequence>